<sequence length="348" mass="39384">MTIAPEGRRMLRVEARNSQTPIETKPRWIRNQVKNGPEYKDMKERVAGASLHTVCQEAGCPNIHECWESREATFLIGGANCSRRCDFCMINSARPEPLDRGEPLRVAESVREMRLNYSTITGVTRDDLPDEGAWLYSEVVRKIHELNPNTGVENLVPDFSGKRDLLQEVFESRPEVFAHNLETVPRIFKRIRPAFRYDRSLDVIRQARDFGLVTKSNLILGMGETREEISEALRDLHSAGTDIITITQYLRPGPLFHPIERWVKPEEFLELSDEAYEIGFAAVMSGPLVRSSYRAGKLYAQALKFRGEELPANLSHLAETTEGPTTQEASSLLERYGASEDAPVIPRG</sequence>
<accession>Q8FNP4</accession>
<feature type="chain" id="PRO_0000102309" description="Lipoyl synthase">
    <location>
        <begin position="1"/>
        <end position="348"/>
    </location>
</feature>
<feature type="domain" description="Radical SAM core" evidence="2">
    <location>
        <begin position="67"/>
        <end position="281"/>
    </location>
</feature>
<feature type="binding site" evidence="1">
    <location>
        <position position="55"/>
    </location>
    <ligand>
        <name>[4Fe-4S] cluster</name>
        <dbReference type="ChEBI" id="CHEBI:49883"/>
        <label>1</label>
    </ligand>
</feature>
<feature type="binding site" evidence="1">
    <location>
        <position position="60"/>
    </location>
    <ligand>
        <name>[4Fe-4S] cluster</name>
        <dbReference type="ChEBI" id="CHEBI:49883"/>
        <label>1</label>
    </ligand>
</feature>
<feature type="binding site" evidence="1">
    <location>
        <position position="66"/>
    </location>
    <ligand>
        <name>[4Fe-4S] cluster</name>
        <dbReference type="ChEBI" id="CHEBI:49883"/>
        <label>1</label>
    </ligand>
</feature>
<feature type="binding site" evidence="1">
    <location>
        <position position="81"/>
    </location>
    <ligand>
        <name>[4Fe-4S] cluster</name>
        <dbReference type="ChEBI" id="CHEBI:49883"/>
        <label>2</label>
        <note>4Fe-4S-S-AdoMet</note>
    </ligand>
</feature>
<feature type="binding site" evidence="1">
    <location>
        <position position="85"/>
    </location>
    <ligand>
        <name>[4Fe-4S] cluster</name>
        <dbReference type="ChEBI" id="CHEBI:49883"/>
        <label>2</label>
        <note>4Fe-4S-S-AdoMet</note>
    </ligand>
</feature>
<feature type="binding site" evidence="1">
    <location>
        <position position="88"/>
    </location>
    <ligand>
        <name>[4Fe-4S] cluster</name>
        <dbReference type="ChEBI" id="CHEBI:49883"/>
        <label>2</label>
        <note>4Fe-4S-S-AdoMet</note>
    </ligand>
</feature>
<feature type="binding site" evidence="1">
    <location>
        <position position="292"/>
    </location>
    <ligand>
        <name>[4Fe-4S] cluster</name>
        <dbReference type="ChEBI" id="CHEBI:49883"/>
        <label>1</label>
    </ligand>
</feature>
<protein>
    <recommendedName>
        <fullName evidence="1">Lipoyl synthase</fullName>
        <ecNumber evidence="1">2.8.1.8</ecNumber>
    </recommendedName>
    <alternativeName>
        <fullName evidence="1">Lip-syn</fullName>
        <shortName evidence="1">LS</shortName>
    </alternativeName>
    <alternativeName>
        <fullName evidence="1">Lipoate synthase</fullName>
    </alternativeName>
    <alternativeName>
        <fullName evidence="1">Lipoic acid synthase</fullName>
    </alternativeName>
    <alternativeName>
        <fullName evidence="1">Sulfur insertion protein LipA</fullName>
    </alternativeName>
</protein>
<gene>
    <name evidence="1" type="primary">lipA</name>
    <name type="ordered locus">CE2100</name>
</gene>
<comment type="function">
    <text evidence="1">Catalyzes the radical-mediated insertion of two sulfur atoms into the C-6 and C-8 positions of the octanoyl moiety bound to the lipoyl domains of lipoate-dependent enzymes, thereby converting the octanoylated domains into lipoylated derivatives.</text>
</comment>
<comment type="catalytic activity">
    <reaction evidence="1">
        <text>[[Fe-S] cluster scaffold protein carrying a second [4Fe-4S](2+) cluster] + N(6)-octanoyl-L-lysyl-[protein] + 2 oxidized [2Fe-2S]-[ferredoxin] + 2 S-adenosyl-L-methionine + 4 H(+) = [[Fe-S] cluster scaffold protein] + N(6)-[(R)-dihydrolipoyl]-L-lysyl-[protein] + 4 Fe(3+) + 2 hydrogen sulfide + 2 5'-deoxyadenosine + 2 L-methionine + 2 reduced [2Fe-2S]-[ferredoxin]</text>
        <dbReference type="Rhea" id="RHEA:16585"/>
        <dbReference type="Rhea" id="RHEA-COMP:9928"/>
        <dbReference type="Rhea" id="RHEA-COMP:10000"/>
        <dbReference type="Rhea" id="RHEA-COMP:10001"/>
        <dbReference type="Rhea" id="RHEA-COMP:10475"/>
        <dbReference type="Rhea" id="RHEA-COMP:14568"/>
        <dbReference type="Rhea" id="RHEA-COMP:14569"/>
        <dbReference type="ChEBI" id="CHEBI:15378"/>
        <dbReference type="ChEBI" id="CHEBI:17319"/>
        <dbReference type="ChEBI" id="CHEBI:29034"/>
        <dbReference type="ChEBI" id="CHEBI:29919"/>
        <dbReference type="ChEBI" id="CHEBI:33722"/>
        <dbReference type="ChEBI" id="CHEBI:33737"/>
        <dbReference type="ChEBI" id="CHEBI:33738"/>
        <dbReference type="ChEBI" id="CHEBI:57844"/>
        <dbReference type="ChEBI" id="CHEBI:59789"/>
        <dbReference type="ChEBI" id="CHEBI:78809"/>
        <dbReference type="ChEBI" id="CHEBI:83100"/>
        <dbReference type="EC" id="2.8.1.8"/>
    </reaction>
</comment>
<comment type="cofactor">
    <cofactor evidence="1">
        <name>[4Fe-4S] cluster</name>
        <dbReference type="ChEBI" id="CHEBI:49883"/>
    </cofactor>
    <text evidence="1">Binds 2 [4Fe-4S] clusters per subunit. One cluster is coordinated with 3 cysteines and an exchangeable S-adenosyl-L-methionine.</text>
</comment>
<comment type="pathway">
    <text evidence="1">Protein modification; protein lipoylation via endogenous pathway; protein N(6)-(lipoyl)lysine from octanoyl-[acyl-carrier-protein]: step 2/2.</text>
</comment>
<comment type="subcellular location">
    <subcellularLocation>
        <location evidence="1">Cytoplasm</location>
    </subcellularLocation>
</comment>
<comment type="similarity">
    <text evidence="1">Belongs to the radical SAM superfamily. Lipoyl synthase family.</text>
</comment>
<keyword id="KW-0004">4Fe-4S</keyword>
<keyword id="KW-0963">Cytoplasm</keyword>
<keyword id="KW-0408">Iron</keyword>
<keyword id="KW-0411">Iron-sulfur</keyword>
<keyword id="KW-0479">Metal-binding</keyword>
<keyword id="KW-1185">Reference proteome</keyword>
<keyword id="KW-0949">S-adenosyl-L-methionine</keyword>
<keyword id="KW-0808">Transferase</keyword>
<proteinExistence type="inferred from homology"/>
<name>LIPA_COREF</name>
<dbReference type="EC" id="2.8.1.8" evidence="1"/>
<dbReference type="EMBL" id="BA000035">
    <property type="protein sequence ID" value="BAC18910.1"/>
    <property type="molecule type" value="Genomic_DNA"/>
</dbReference>
<dbReference type="RefSeq" id="WP_011075761.1">
    <property type="nucleotide sequence ID" value="NC_004369.1"/>
</dbReference>
<dbReference type="SMR" id="Q8FNP4"/>
<dbReference type="STRING" id="196164.gene:10742528"/>
<dbReference type="KEGG" id="cef:CE2100"/>
<dbReference type="eggNOG" id="COG0320">
    <property type="taxonomic scope" value="Bacteria"/>
</dbReference>
<dbReference type="HOGENOM" id="CLU_033144_2_1_11"/>
<dbReference type="OrthoDB" id="9787898at2"/>
<dbReference type="UniPathway" id="UPA00538">
    <property type="reaction ID" value="UER00593"/>
</dbReference>
<dbReference type="Proteomes" id="UP000001409">
    <property type="component" value="Chromosome"/>
</dbReference>
<dbReference type="GO" id="GO:0005737">
    <property type="term" value="C:cytoplasm"/>
    <property type="evidence" value="ECO:0007669"/>
    <property type="project" value="UniProtKB-SubCell"/>
</dbReference>
<dbReference type="GO" id="GO:0051539">
    <property type="term" value="F:4 iron, 4 sulfur cluster binding"/>
    <property type="evidence" value="ECO:0007669"/>
    <property type="project" value="UniProtKB-UniRule"/>
</dbReference>
<dbReference type="GO" id="GO:0016992">
    <property type="term" value="F:lipoate synthase activity"/>
    <property type="evidence" value="ECO:0007669"/>
    <property type="project" value="UniProtKB-UniRule"/>
</dbReference>
<dbReference type="GO" id="GO:0046872">
    <property type="term" value="F:metal ion binding"/>
    <property type="evidence" value="ECO:0007669"/>
    <property type="project" value="UniProtKB-KW"/>
</dbReference>
<dbReference type="CDD" id="cd01335">
    <property type="entry name" value="Radical_SAM"/>
    <property type="match status" value="1"/>
</dbReference>
<dbReference type="Gene3D" id="3.20.20.70">
    <property type="entry name" value="Aldolase class I"/>
    <property type="match status" value="1"/>
</dbReference>
<dbReference type="HAMAP" id="MF_00206">
    <property type="entry name" value="Lipoyl_synth"/>
    <property type="match status" value="1"/>
</dbReference>
<dbReference type="InterPro" id="IPR013785">
    <property type="entry name" value="Aldolase_TIM"/>
</dbReference>
<dbReference type="InterPro" id="IPR006638">
    <property type="entry name" value="Elp3/MiaA/NifB-like_rSAM"/>
</dbReference>
<dbReference type="InterPro" id="IPR003698">
    <property type="entry name" value="Lipoyl_synth"/>
</dbReference>
<dbReference type="InterPro" id="IPR007197">
    <property type="entry name" value="rSAM"/>
</dbReference>
<dbReference type="NCBIfam" id="NF004019">
    <property type="entry name" value="PRK05481.1"/>
    <property type="match status" value="1"/>
</dbReference>
<dbReference type="NCBIfam" id="NF009544">
    <property type="entry name" value="PRK12928.1"/>
    <property type="match status" value="1"/>
</dbReference>
<dbReference type="PANTHER" id="PTHR10949">
    <property type="entry name" value="LIPOYL SYNTHASE"/>
    <property type="match status" value="1"/>
</dbReference>
<dbReference type="PANTHER" id="PTHR10949:SF0">
    <property type="entry name" value="LIPOYL SYNTHASE, MITOCHONDRIAL"/>
    <property type="match status" value="1"/>
</dbReference>
<dbReference type="Pfam" id="PF04055">
    <property type="entry name" value="Radical_SAM"/>
    <property type="match status" value="1"/>
</dbReference>
<dbReference type="PIRSF" id="PIRSF005963">
    <property type="entry name" value="Lipoyl_synth"/>
    <property type="match status" value="1"/>
</dbReference>
<dbReference type="SFLD" id="SFLDF00271">
    <property type="entry name" value="lipoyl_synthase"/>
    <property type="match status" value="1"/>
</dbReference>
<dbReference type="SFLD" id="SFLDG01058">
    <property type="entry name" value="lipoyl_synthase_like"/>
    <property type="match status" value="1"/>
</dbReference>
<dbReference type="SMART" id="SM00729">
    <property type="entry name" value="Elp3"/>
    <property type="match status" value="1"/>
</dbReference>
<dbReference type="SUPFAM" id="SSF102114">
    <property type="entry name" value="Radical SAM enzymes"/>
    <property type="match status" value="1"/>
</dbReference>
<dbReference type="PROSITE" id="PS51918">
    <property type="entry name" value="RADICAL_SAM"/>
    <property type="match status" value="1"/>
</dbReference>
<evidence type="ECO:0000255" key="1">
    <source>
        <dbReference type="HAMAP-Rule" id="MF_00206"/>
    </source>
</evidence>
<evidence type="ECO:0000255" key="2">
    <source>
        <dbReference type="PROSITE-ProRule" id="PRU01266"/>
    </source>
</evidence>
<reference key="1">
    <citation type="journal article" date="2003" name="Genome Res.">
        <title>Comparative complete genome sequence analysis of the amino acid replacements responsible for the thermostability of Corynebacterium efficiens.</title>
        <authorList>
            <person name="Nishio Y."/>
            <person name="Nakamura Y."/>
            <person name="Kawarabayasi Y."/>
            <person name="Usuda Y."/>
            <person name="Kimura E."/>
            <person name="Sugimoto S."/>
            <person name="Matsui K."/>
            <person name="Yamagishi A."/>
            <person name="Kikuchi H."/>
            <person name="Ikeo K."/>
            <person name="Gojobori T."/>
        </authorList>
    </citation>
    <scope>NUCLEOTIDE SEQUENCE [LARGE SCALE GENOMIC DNA]</scope>
    <source>
        <strain>DSM 44549 / YS-314 / AJ 12310 / JCM 11189 / NBRC 100395</strain>
    </source>
</reference>
<organism>
    <name type="scientific">Corynebacterium efficiens (strain DSM 44549 / YS-314 / AJ 12310 / JCM 11189 / NBRC 100395)</name>
    <dbReference type="NCBI Taxonomy" id="196164"/>
    <lineage>
        <taxon>Bacteria</taxon>
        <taxon>Bacillati</taxon>
        <taxon>Actinomycetota</taxon>
        <taxon>Actinomycetes</taxon>
        <taxon>Mycobacteriales</taxon>
        <taxon>Corynebacteriaceae</taxon>
        <taxon>Corynebacterium</taxon>
    </lineage>
</organism>